<dbReference type="EC" id="3.4.19.3" evidence="1"/>
<dbReference type="EMBL" id="CP000736">
    <property type="protein sequence ID" value="ABR53593.1"/>
    <property type="molecule type" value="Genomic_DNA"/>
</dbReference>
<dbReference type="SMR" id="A6U575"/>
<dbReference type="MEROPS" id="C15.001"/>
<dbReference type="KEGG" id="sah:SaurJH1_2771"/>
<dbReference type="HOGENOM" id="CLU_043960_4_0_9"/>
<dbReference type="GO" id="GO:0005829">
    <property type="term" value="C:cytosol"/>
    <property type="evidence" value="ECO:0007669"/>
    <property type="project" value="InterPro"/>
</dbReference>
<dbReference type="GO" id="GO:0016920">
    <property type="term" value="F:pyroglutamyl-peptidase activity"/>
    <property type="evidence" value="ECO:0007669"/>
    <property type="project" value="UniProtKB-UniRule"/>
</dbReference>
<dbReference type="GO" id="GO:0006508">
    <property type="term" value="P:proteolysis"/>
    <property type="evidence" value="ECO:0007669"/>
    <property type="project" value="UniProtKB-KW"/>
</dbReference>
<dbReference type="CDD" id="cd00501">
    <property type="entry name" value="Peptidase_C15"/>
    <property type="match status" value="1"/>
</dbReference>
<dbReference type="FunFam" id="3.40.630.20:FF:000001">
    <property type="entry name" value="Pyrrolidone-carboxylate peptidase"/>
    <property type="match status" value="1"/>
</dbReference>
<dbReference type="Gene3D" id="3.40.630.20">
    <property type="entry name" value="Peptidase C15, pyroglutamyl peptidase I-like"/>
    <property type="match status" value="1"/>
</dbReference>
<dbReference type="HAMAP" id="MF_00417">
    <property type="entry name" value="Pyrrolid_peptidase"/>
    <property type="match status" value="1"/>
</dbReference>
<dbReference type="InterPro" id="IPR000816">
    <property type="entry name" value="Peptidase_C15"/>
</dbReference>
<dbReference type="InterPro" id="IPR016125">
    <property type="entry name" value="Peptidase_C15-like"/>
</dbReference>
<dbReference type="InterPro" id="IPR036440">
    <property type="entry name" value="Peptidase_C15-like_sf"/>
</dbReference>
<dbReference type="InterPro" id="IPR029762">
    <property type="entry name" value="PGP-I_bact-type"/>
</dbReference>
<dbReference type="InterPro" id="IPR033694">
    <property type="entry name" value="PGPEP1_Cys_AS"/>
</dbReference>
<dbReference type="InterPro" id="IPR033693">
    <property type="entry name" value="PGPEP1_Glu_AS"/>
</dbReference>
<dbReference type="NCBIfam" id="NF009676">
    <property type="entry name" value="PRK13197.1"/>
    <property type="match status" value="1"/>
</dbReference>
<dbReference type="NCBIfam" id="TIGR00504">
    <property type="entry name" value="pyro_pdase"/>
    <property type="match status" value="1"/>
</dbReference>
<dbReference type="PANTHER" id="PTHR23402">
    <property type="entry name" value="PROTEASE FAMILY C15 PYROGLUTAMYL-PEPTIDASE I-RELATED"/>
    <property type="match status" value="1"/>
</dbReference>
<dbReference type="PANTHER" id="PTHR23402:SF1">
    <property type="entry name" value="PYROGLUTAMYL-PEPTIDASE I"/>
    <property type="match status" value="1"/>
</dbReference>
<dbReference type="Pfam" id="PF01470">
    <property type="entry name" value="Peptidase_C15"/>
    <property type="match status" value="1"/>
</dbReference>
<dbReference type="PIRSF" id="PIRSF015592">
    <property type="entry name" value="Prld-crbxl_pptds"/>
    <property type="match status" value="1"/>
</dbReference>
<dbReference type="PRINTS" id="PR00706">
    <property type="entry name" value="PYROGLUPTASE"/>
</dbReference>
<dbReference type="SUPFAM" id="SSF53182">
    <property type="entry name" value="Pyrrolidone carboxyl peptidase (pyroglutamate aminopeptidase)"/>
    <property type="match status" value="1"/>
</dbReference>
<dbReference type="PROSITE" id="PS01334">
    <property type="entry name" value="PYRASE_CYS"/>
    <property type="match status" value="1"/>
</dbReference>
<dbReference type="PROSITE" id="PS01333">
    <property type="entry name" value="PYRASE_GLU"/>
    <property type="match status" value="1"/>
</dbReference>
<gene>
    <name evidence="1" type="primary">pcp</name>
    <name type="ordered locus">SaurJH1_2771</name>
</gene>
<organism>
    <name type="scientific">Staphylococcus aureus (strain JH1)</name>
    <dbReference type="NCBI Taxonomy" id="359787"/>
    <lineage>
        <taxon>Bacteria</taxon>
        <taxon>Bacillati</taxon>
        <taxon>Bacillota</taxon>
        <taxon>Bacilli</taxon>
        <taxon>Bacillales</taxon>
        <taxon>Staphylococcaceae</taxon>
        <taxon>Staphylococcus</taxon>
    </lineage>
</organism>
<accession>A6U575</accession>
<sequence>MHILVTGFAPFDNQNINPSWEAVTQLEDIIGTHTIDKLKLPTSFKKVDNIINKTLASNHYDVVLAIGQAGGRNAITPERVAINIDDARIPDNDDFQPIDQAIHLDGAPAYFSNLPVKAMTQSIINQGLPGALSNSAGTYVCNHVLYHLGYLQDKHYPHLRFGFIHVPYIPEQVIGKPDTPSMPLEKIVAGLTAAIEAISNDEDLRIALGTTE</sequence>
<comment type="function">
    <text evidence="1">Removes 5-oxoproline from various penultimate amino acid residues except L-proline.</text>
</comment>
<comment type="catalytic activity">
    <reaction evidence="1">
        <text>Release of an N-terminal pyroglutamyl group from a polypeptide, the second amino acid generally not being Pro.</text>
        <dbReference type="EC" id="3.4.19.3"/>
    </reaction>
</comment>
<comment type="subunit">
    <text evidence="1">Homotetramer.</text>
</comment>
<comment type="subcellular location">
    <subcellularLocation>
        <location evidence="1">Cytoplasm</location>
    </subcellularLocation>
</comment>
<comment type="similarity">
    <text evidence="1">Belongs to the peptidase C15 family.</text>
</comment>
<proteinExistence type="inferred from homology"/>
<evidence type="ECO:0000255" key="1">
    <source>
        <dbReference type="HAMAP-Rule" id="MF_00417"/>
    </source>
</evidence>
<keyword id="KW-0963">Cytoplasm</keyword>
<keyword id="KW-0378">Hydrolase</keyword>
<keyword id="KW-0645">Protease</keyword>
<keyword id="KW-0788">Thiol protease</keyword>
<feature type="chain" id="PRO_1000080515" description="Pyrrolidone-carboxylate peptidase">
    <location>
        <begin position="1"/>
        <end position="212"/>
    </location>
</feature>
<feature type="active site" evidence="1">
    <location>
        <position position="78"/>
    </location>
</feature>
<feature type="active site" evidence="1">
    <location>
        <position position="141"/>
    </location>
</feature>
<feature type="active site" evidence="1">
    <location>
        <position position="165"/>
    </location>
</feature>
<reference key="1">
    <citation type="submission" date="2007-06" db="EMBL/GenBank/DDBJ databases">
        <title>Complete sequence of chromosome of Staphylococcus aureus subsp. aureus JH1.</title>
        <authorList>
            <consortium name="US DOE Joint Genome Institute"/>
            <person name="Copeland A."/>
            <person name="Lucas S."/>
            <person name="Lapidus A."/>
            <person name="Barry K."/>
            <person name="Detter J.C."/>
            <person name="Glavina del Rio T."/>
            <person name="Hammon N."/>
            <person name="Israni S."/>
            <person name="Dalin E."/>
            <person name="Tice H."/>
            <person name="Pitluck S."/>
            <person name="Chain P."/>
            <person name="Malfatti S."/>
            <person name="Shin M."/>
            <person name="Vergez L."/>
            <person name="Schmutz J."/>
            <person name="Larimer F."/>
            <person name="Land M."/>
            <person name="Hauser L."/>
            <person name="Kyrpides N."/>
            <person name="Ivanova N."/>
            <person name="Tomasz A."/>
            <person name="Richardson P."/>
        </authorList>
    </citation>
    <scope>NUCLEOTIDE SEQUENCE [LARGE SCALE GENOMIC DNA]</scope>
    <source>
        <strain>JH1</strain>
    </source>
</reference>
<protein>
    <recommendedName>
        <fullName evidence="1">Pyrrolidone-carboxylate peptidase</fullName>
        <ecNumber evidence="1">3.4.19.3</ecNumber>
    </recommendedName>
    <alternativeName>
        <fullName evidence="1">5-oxoprolyl-peptidase</fullName>
    </alternativeName>
    <alternativeName>
        <fullName evidence="1">Pyroglutamyl-peptidase I</fullName>
        <shortName evidence="1">PGP-I</shortName>
        <shortName evidence="1">Pyrase</shortName>
    </alternativeName>
</protein>
<name>PCP_STAA2</name>